<organism>
    <name type="scientific">Staphylococcus aureus (strain JH1)</name>
    <dbReference type="NCBI Taxonomy" id="359787"/>
    <lineage>
        <taxon>Bacteria</taxon>
        <taxon>Bacillati</taxon>
        <taxon>Bacillota</taxon>
        <taxon>Bacilli</taxon>
        <taxon>Bacillales</taxon>
        <taxon>Staphylococcaceae</taxon>
        <taxon>Staphylococcus</taxon>
    </lineage>
</organism>
<sequence length="345" mass="39352">MVHNKNNTILKMIKGEETSHTPVWFMRQAGRSQPEYRKLKEKYSLFDITHQPELCAYVTHLPVDNYHTDAAILYKDIMTPLKPIGVDVEIKSGIGPVIHNPIKTIQDVEKLSQIDPERDVPYVLDTIKLLTEEKLNVPLIGFTGAPFTLASYMIEGGPSKNYNFTKAMMYRDEATWFALMNHLVDVSVKYVTAQVEAGAELIQIFDSWVGALNVEDYRRYIKPHMIRLISEVKEKHDVPVILFGVGASHLINEWNDLPIDVLGLDWRTSINQAQQLGVTKTLQGNLDPSILLAPWNVIEERLKPILDQGMENGKHIFNLGHGVFPEVQPETLRKVSEFVHTYTQR</sequence>
<gene>
    <name evidence="1" type="primary">hemE</name>
    <name type="ordered locus">SaurJH1_1921</name>
</gene>
<protein>
    <recommendedName>
        <fullName evidence="1">Uroporphyrinogen decarboxylase</fullName>
        <shortName evidence="1">UPD</shortName>
        <shortName evidence="1">URO-D</shortName>
        <ecNumber evidence="1">4.1.1.37</ecNumber>
    </recommendedName>
</protein>
<comment type="function">
    <text evidence="1">Catalyzes the decarboxylation of four acetate groups of uroporphyrinogen-III to yield coproporphyrinogen-III.</text>
</comment>
<comment type="catalytic activity">
    <reaction evidence="1">
        <text>uroporphyrinogen III + 4 H(+) = coproporphyrinogen III + 4 CO2</text>
        <dbReference type="Rhea" id="RHEA:19865"/>
        <dbReference type="ChEBI" id="CHEBI:15378"/>
        <dbReference type="ChEBI" id="CHEBI:16526"/>
        <dbReference type="ChEBI" id="CHEBI:57308"/>
        <dbReference type="ChEBI" id="CHEBI:57309"/>
        <dbReference type="EC" id="4.1.1.37"/>
    </reaction>
</comment>
<comment type="pathway">
    <text evidence="1">Porphyrin-containing compound metabolism; protoporphyrin-IX biosynthesis; coproporphyrinogen-III from 5-aminolevulinate: step 4/4.</text>
</comment>
<comment type="subunit">
    <text evidence="1">Homodimer.</text>
</comment>
<comment type="subcellular location">
    <subcellularLocation>
        <location evidence="1">Cytoplasm</location>
    </subcellularLocation>
</comment>
<comment type="similarity">
    <text evidence="1">Belongs to the uroporphyrinogen decarboxylase family.</text>
</comment>
<evidence type="ECO:0000255" key="1">
    <source>
        <dbReference type="HAMAP-Rule" id="MF_00218"/>
    </source>
</evidence>
<proteinExistence type="inferred from homology"/>
<keyword id="KW-0963">Cytoplasm</keyword>
<keyword id="KW-0210">Decarboxylase</keyword>
<keyword id="KW-0456">Lyase</keyword>
<keyword id="KW-0627">Porphyrin biosynthesis</keyword>
<dbReference type="EC" id="4.1.1.37" evidence="1"/>
<dbReference type="EMBL" id="CP000736">
    <property type="protein sequence ID" value="ABR52755.1"/>
    <property type="molecule type" value="Genomic_DNA"/>
</dbReference>
<dbReference type="SMR" id="A6U2T7"/>
<dbReference type="KEGG" id="sah:SaurJH1_1921"/>
<dbReference type="HOGENOM" id="CLU_040933_0_1_9"/>
<dbReference type="UniPathway" id="UPA00251">
    <property type="reaction ID" value="UER00321"/>
</dbReference>
<dbReference type="GO" id="GO:0005829">
    <property type="term" value="C:cytosol"/>
    <property type="evidence" value="ECO:0007669"/>
    <property type="project" value="TreeGrafter"/>
</dbReference>
<dbReference type="GO" id="GO:0004853">
    <property type="term" value="F:uroporphyrinogen decarboxylase activity"/>
    <property type="evidence" value="ECO:0007669"/>
    <property type="project" value="UniProtKB-UniRule"/>
</dbReference>
<dbReference type="GO" id="GO:0006782">
    <property type="term" value="P:protoporphyrinogen IX biosynthetic process"/>
    <property type="evidence" value="ECO:0007669"/>
    <property type="project" value="UniProtKB-UniRule"/>
</dbReference>
<dbReference type="CDD" id="cd00717">
    <property type="entry name" value="URO-D"/>
    <property type="match status" value="1"/>
</dbReference>
<dbReference type="FunFam" id="3.20.20.210:FF:000005">
    <property type="entry name" value="Uroporphyrinogen decarboxylase"/>
    <property type="match status" value="1"/>
</dbReference>
<dbReference type="Gene3D" id="3.20.20.210">
    <property type="match status" value="1"/>
</dbReference>
<dbReference type="HAMAP" id="MF_00218">
    <property type="entry name" value="URO_D"/>
    <property type="match status" value="1"/>
</dbReference>
<dbReference type="InterPro" id="IPR038071">
    <property type="entry name" value="UROD/MetE-like_sf"/>
</dbReference>
<dbReference type="InterPro" id="IPR006361">
    <property type="entry name" value="Uroporphyrinogen_deCO2ase_HemE"/>
</dbReference>
<dbReference type="InterPro" id="IPR000257">
    <property type="entry name" value="Uroporphyrinogen_deCOase"/>
</dbReference>
<dbReference type="NCBIfam" id="TIGR01464">
    <property type="entry name" value="hemE"/>
    <property type="match status" value="1"/>
</dbReference>
<dbReference type="PANTHER" id="PTHR21091">
    <property type="entry name" value="METHYLTETRAHYDROFOLATE:HOMOCYSTEINE METHYLTRANSFERASE RELATED"/>
    <property type="match status" value="1"/>
</dbReference>
<dbReference type="PANTHER" id="PTHR21091:SF169">
    <property type="entry name" value="UROPORPHYRINOGEN DECARBOXYLASE"/>
    <property type="match status" value="1"/>
</dbReference>
<dbReference type="Pfam" id="PF01208">
    <property type="entry name" value="URO-D"/>
    <property type="match status" value="1"/>
</dbReference>
<dbReference type="SUPFAM" id="SSF51726">
    <property type="entry name" value="UROD/MetE-like"/>
    <property type="match status" value="1"/>
</dbReference>
<dbReference type="PROSITE" id="PS00906">
    <property type="entry name" value="UROD_1"/>
    <property type="match status" value="1"/>
</dbReference>
<dbReference type="PROSITE" id="PS00907">
    <property type="entry name" value="UROD_2"/>
    <property type="match status" value="1"/>
</dbReference>
<accession>A6U2T7</accession>
<feature type="chain" id="PRO_1000078092" description="Uroporphyrinogen decarboxylase">
    <location>
        <begin position="1"/>
        <end position="345"/>
    </location>
</feature>
<feature type="binding site" evidence="1">
    <location>
        <begin position="27"/>
        <end position="31"/>
    </location>
    <ligand>
        <name>substrate</name>
    </ligand>
</feature>
<feature type="binding site" evidence="1">
    <location>
        <position position="46"/>
    </location>
    <ligand>
        <name>substrate</name>
    </ligand>
</feature>
<feature type="binding site" evidence="1">
    <location>
        <position position="76"/>
    </location>
    <ligand>
        <name>substrate</name>
    </ligand>
</feature>
<feature type="binding site" evidence="1">
    <location>
        <position position="152"/>
    </location>
    <ligand>
        <name>substrate</name>
    </ligand>
</feature>
<feature type="binding site" evidence="1">
    <location>
        <position position="207"/>
    </location>
    <ligand>
        <name>substrate</name>
    </ligand>
</feature>
<feature type="binding site" evidence="1">
    <location>
        <position position="321"/>
    </location>
    <ligand>
        <name>substrate</name>
    </ligand>
</feature>
<feature type="site" description="Transition state stabilizer" evidence="1">
    <location>
        <position position="76"/>
    </location>
</feature>
<reference key="1">
    <citation type="submission" date="2007-06" db="EMBL/GenBank/DDBJ databases">
        <title>Complete sequence of chromosome of Staphylococcus aureus subsp. aureus JH1.</title>
        <authorList>
            <consortium name="US DOE Joint Genome Institute"/>
            <person name="Copeland A."/>
            <person name="Lucas S."/>
            <person name="Lapidus A."/>
            <person name="Barry K."/>
            <person name="Detter J.C."/>
            <person name="Glavina del Rio T."/>
            <person name="Hammon N."/>
            <person name="Israni S."/>
            <person name="Dalin E."/>
            <person name="Tice H."/>
            <person name="Pitluck S."/>
            <person name="Chain P."/>
            <person name="Malfatti S."/>
            <person name="Shin M."/>
            <person name="Vergez L."/>
            <person name="Schmutz J."/>
            <person name="Larimer F."/>
            <person name="Land M."/>
            <person name="Hauser L."/>
            <person name="Kyrpides N."/>
            <person name="Ivanova N."/>
            <person name="Tomasz A."/>
            <person name="Richardson P."/>
        </authorList>
    </citation>
    <scope>NUCLEOTIDE SEQUENCE [LARGE SCALE GENOMIC DNA]</scope>
    <source>
        <strain>JH1</strain>
    </source>
</reference>
<name>DCUP_STAA2</name>